<gene>
    <name evidence="1" type="primary">ubiG</name>
    <name type="ordered locus">RPC_0515</name>
</gene>
<organism>
    <name type="scientific">Rhodopseudomonas palustris (strain BisB18)</name>
    <dbReference type="NCBI Taxonomy" id="316056"/>
    <lineage>
        <taxon>Bacteria</taxon>
        <taxon>Pseudomonadati</taxon>
        <taxon>Pseudomonadota</taxon>
        <taxon>Alphaproteobacteria</taxon>
        <taxon>Hyphomicrobiales</taxon>
        <taxon>Nitrobacteraceae</taxon>
        <taxon>Rhodopseudomonas</taxon>
    </lineage>
</organism>
<proteinExistence type="inferred from homology"/>
<protein>
    <recommendedName>
        <fullName evidence="1">Ubiquinone biosynthesis O-methyltransferase</fullName>
    </recommendedName>
    <alternativeName>
        <fullName evidence="1">2-polyprenyl-6-hydroxyphenol methylase</fullName>
        <ecNumber evidence="1">2.1.1.222</ecNumber>
    </alternativeName>
    <alternativeName>
        <fullName evidence="1">3-demethylubiquinone 3-O-methyltransferase</fullName>
        <ecNumber evidence="1">2.1.1.64</ecNumber>
    </alternativeName>
</protein>
<comment type="function">
    <text evidence="1">O-methyltransferase that catalyzes the 2 O-methylation steps in the ubiquinone biosynthetic pathway.</text>
</comment>
<comment type="catalytic activity">
    <reaction evidence="1">
        <text>a 3-demethylubiquinol + S-adenosyl-L-methionine = a ubiquinol + S-adenosyl-L-homocysteine + H(+)</text>
        <dbReference type="Rhea" id="RHEA:44380"/>
        <dbReference type="Rhea" id="RHEA-COMP:9566"/>
        <dbReference type="Rhea" id="RHEA-COMP:10914"/>
        <dbReference type="ChEBI" id="CHEBI:15378"/>
        <dbReference type="ChEBI" id="CHEBI:17976"/>
        <dbReference type="ChEBI" id="CHEBI:57856"/>
        <dbReference type="ChEBI" id="CHEBI:59789"/>
        <dbReference type="ChEBI" id="CHEBI:84422"/>
        <dbReference type="EC" id="2.1.1.64"/>
    </reaction>
</comment>
<comment type="catalytic activity">
    <reaction evidence="1">
        <text>a 3-(all-trans-polyprenyl)benzene-1,2-diol + S-adenosyl-L-methionine = a 2-methoxy-6-(all-trans-polyprenyl)phenol + S-adenosyl-L-homocysteine + H(+)</text>
        <dbReference type="Rhea" id="RHEA:31411"/>
        <dbReference type="Rhea" id="RHEA-COMP:9550"/>
        <dbReference type="Rhea" id="RHEA-COMP:9551"/>
        <dbReference type="ChEBI" id="CHEBI:15378"/>
        <dbReference type="ChEBI" id="CHEBI:57856"/>
        <dbReference type="ChEBI" id="CHEBI:59789"/>
        <dbReference type="ChEBI" id="CHEBI:62729"/>
        <dbReference type="ChEBI" id="CHEBI:62731"/>
        <dbReference type="EC" id="2.1.1.222"/>
    </reaction>
</comment>
<comment type="pathway">
    <text evidence="1">Cofactor biosynthesis; ubiquinone biosynthesis.</text>
</comment>
<comment type="similarity">
    <text evidence="1">Belongs to the methyltransferase superfamily. UbiG/COQ3 family.</text>
</comment>
<dbReference type="EC" id="2.1.1.222" evidence="1"/>
<dbReference type="EC" id="2.1.1.64" evidence="1"/>
<dbReference type="EMBL" id="CP000301">
    <property type="protein sequence ID" value="ABD86090.1"/>
    <property type="molecule type" value="Genomic_DNA"/>
</dbReference>
<dbReference type="SMR" id="Q21BZ6"/>
<dbReference type="STRING" id="316056.RPC_0515"/>
<dbReference type="KEGG" id="rpc:RPC_0515"/>
<dbReference type="eggNOG" id="COG2227">
    <property type="taxonomic scope" value="Bacteria"/>
</dbReference>
<dbReference type="HOGENOM" id="CLU_042432_0_0_5"/>
<dbReference type="OrthoDB" id="9801538at2"/>
<dbReference type="UniPathway" id="UPA00232"/>
<dbReference type="GO" id="GO:0102208">
    <property type="term" value="F:2-polyprenyl-6-hydroxyphenol methylase activity"/>
    <property type="evidence" value="ECO:0007669"/>
    <property type="project" value="UniProtKB-EC"/>
</dbReference>
<dbReference type="GO" id="GO:0061542">
    <property type="term" value="F:3-demethylubiquinol 3-O-methyltransferase activity"/>
    <property type="evidence" value="ECO:0007669"/>
    <property type="project" value="UniProtKB-UniRule"/>
</dbReference>
<dbReference type="GO" id="GO:0010420">
    <property type="term" value="F:polyprenyldihydroxybenzoate methyltransferase activity"/>
    <property type="evidence" value="ECO:0007669"/>
    <property type="project" value="InterPro"/>
</dbReference>
<dbReference type="GO" id="GO:0032259">
    <property type="term" value="P:methylation"/>
    <property type="evidence" value="ECO:0007669"/>
    <property type="project" value="UniProtKB-KW"/>
</dbReference>
<dbReference type="CDD" id="cd02440">
    <property type="entry name" value="AdoMet_MTases"/>
    <property type="match status" value="1"/>
</dbReference>
<dbReference type="Gene3D" id="3.40.50.150">
    <property type="entry name" value="Vaccinia Virus protein VP39"/>
    <property type="match status" value="1"/>
</dbReference>
<dbReference type="HAMAP" id="MF_00472">
    <property type="entry name" value="UbiG"/>
    <property type="match status" value="1"/>
</dbReference>
<dbReference type="InterPro" id="IPR029063">
    <property type="entry name" value="SAM-dependent_MTases_sf"/>
</dbReference>
<dbReference type="InterPro" id="IPR010233">
    <property type="entry name" value="UbiG_MeTrfase"/>
</dbReference>
<dbReference type="NCBIfam" id="TIGR01983">
    <property type="entry name" value="UbiG"/>
    <property type="match status" value="1"/>
</dbReference>
<dbReference type="PANTHER" id="PTHR43464">
    <property type="entry name" value="METHYLTRANSFERASE"/>
    <property type="match status" value="1"/>
</dbReference>
<dbReference type="PANTHER" id="PTHR43464:SF19">
    <property type="entry name" value="UBIQUINONE BIOSYNTHESIS O-METHYLTRANSFERASE, MITOCHONDRIAL"/>
    <property type="match status" value="1"/>
</dbReference>
<dbReference type="Pfam" id="PF13489">
    <property type="entry name" value="Methyltransf_23"/>
    <property type="match status" value="1"/>
</dbReference>
<dbReference type="SUPFAM" id="SSF53335">
    <property type="entry name" value="S-adenosyl-L-methionine-dependent methyltransferases"/>
    <property type="match status" value="1"/>
</dbReference>
<name>UBIG_RHOPB</name>
<sequence length="254" mass="27921">MSMQSNSSDASSATVDPAEIAKFSRLSAQWWDPTGKMAPLHKINPLRLSFIRDAACRKFERNAKSLNCLSGLRMIDIGCGAGLLCEPFTRLGAQVIGVDPSATNIAAAKLHAEKSQLLIDYRCTTVEQMDPRERFDIVLAMEVIEHVTDVGAFLARCAAITKPGGLMVVATLNRNWKSFALAIVGAEYVMRWLPRGTHQWDKFVTPDELTKHLHNNKLAVTEQAGLVYNPLADKWSLSADMDVNYMVVAETAAG</sequence>
<reference key="1">
    <citation type="submission" date="2006-03" db="EMBL/GenBank/DDBJ databases">
        <title>Complete sequence of Rhodopseudomonas palustris BisB18.</title>
        <authorList>
            <consortium name="US DOE Joint Genome Institute"/>
            <person name="Copeland A."/>
            <person name="Lucas S."/>
            <person name="Lapidus A."/>
            <person name="Barry K."/>
            <person name="Detter J.C."/>
            <person name="Glavina del Rio T."/>
            <person name="Hammon N."/>
            <person name="Israni S."/>
            <person name="Dalin E."/>
            <person name="Tice H."/>
            <person name="Pitluck S."/>
            <person name="Chain P."/>
            <person name="Malfatti S."/>
            <person name="Shin M."/>
            <person name="Vergez L."/>
            <person name="Schmutz J."/>
            <person name="Larimer F."/>
            <person name="Land M."/>
            <person name="Hauser L."/>
            <person name="Pelletier D.A."/>
            <person name="Kyrpides N."/>
            <person name="Anderson I."/>
            <person name="Oda Y."/>
            <person name="Harwood C.S."/>
            <person name="Richardson P."/>
        </authorList>
    </citation>
    <scope>NUCLEOTIDE SEQUENCE [LARGE SCALE GENOMIC DNA]</scope>
    <source>
        <strain>BisB18</strain>
    </source>
</reference>
<evidence type="ECO:0000255" key="1">
    <source>
        <dbReference type="HAMAP-Rule" id="MF_00472"/>
    </source>
</evidence>
<keyword id="KW-0489">Methyltransferase</keyword>
<keyword id="KW-0949">S-adenosyl-L-methionine</keyword>
<keyword id="KW-0808">Transferase</keyword>
<keyword id="KW-0831">Ubiquinone biosynthesis</keyword>
<feature type="chain" id="PRO_0000241728" description="Ubiquinone biosynthesis O-methyltransferase">
    <location>
        <begin position="1"/>
        <end position="254"/>
    </location>
</feature>
<feature type="binding site" evidence="1">
    <location>
        <position position="47"/>
    </location>
    <ligand>
        <name>S-adenosyl-L-methionine</name>
        <dbReference type="ChEBI" id="CHEBI:59789"/>
    </ligand>
</feature>
<feature type="binding site" evidence="1">
    <location>
        <position position="78"/>
    </location>
    <ligand>
        <name>S-adenosyl-L-methionine</name>
        <dbReference type="ChEBI" id="CHEBI:59789"/>
    </ligand>
</feature>
<feature type="binding site" evidence="1">
    <location>
        <position position="99"/>
    </location>
    <ligand>
        <name>S-adenosyl-L-methionine</name>
        <dbReference type="ChEBI" id="CHEBI:59789"/>
    </ligand>
</feature>
<feature type="binding site" evidence="1">
    <location>
        <position position="141"/>
    </location>
    <ligand>
        <name>S-adenosyl-L-methionine</name>
        <dbReference type="ChEBI" id="CHEBI:59789"/>
    </ligand>
</feature>
<accession>Q21BZ6</accession>